<reference key="1">
    <citation type="journal article" date="2013" name="J. Agric. Food Chem.">
        <title>Diversity and relative levels of actinidin, kiwellin, and thaumatin-like allergens in 15 varieties of kiwifruit (Actinidia).</title>
        <authorList>
            <person name="Maddumage R."/>
            <person name="Nieuwenhuizen N.J."/>
            <person name="Bulley S.M."/>
            <person name="Cooney J.M."/>
            <person name="Green S.A."/>
            <person name="Atkinson R.G."/>
        </authorList>
    </citation>
    <scope>NUCLEOTIDE SEQUENCE [MRNA]</scope>
    <scope>IDENTIFICATION BY MASS SPECTROMETRY</scope>
</reference>
<reference key="2">
    <citation type="journal article" date="2018" name="BMC Genomics">
        <title>A manually annotated Actinidia chinensis var. chinensis (kiwifruit) genome highlights the challenges associated with draft genomes and gene prediction in plants.</title>
        <authorList>
            <person name="Pilkington S.M."/>
            <person name="Crowhurst R."/>
            <person name="Hilario E."/>
            <person name="Nardozza S."/>
            <person name="Fraser L."/>
            <person name="Peng Y."/>
            <person name="Gunaseelan K."/>
            <person name="Simpson R."/>
            <person name="Tahir J."/>
            <person name="Deroles S.C."/>
            <person name="Templeton K."/>
            <person name="Luo Z."/>
            <person name="Davy M."/>
            <person name="Cheng C."/>
            <person name="McNeilage M."/>
            <person name="Scaglione D."/>
            <person name="Liu Y."/>
            <person name="Zhang Q."/>
            <person name="Datson P."/>
            <person name="De Silva N."/>
            <person name="Gardiner S.E."/>
            <person name="Bassett H."/>
            <person name="Chagne D."/>
            <person name="McCallum J."/>
            <person name="Dzierzon H."/>
            <person name="Deng C."/>
            <person name="Wang Y.Y."/>
            <person name="Barron L."/>
            <person name="Manako K."/>
            <person name="Bowen J."/>
            <person name="Foster T.M."/>
            <person name="Erridge Z.A."/>
            <person name="Tiffin H."/>
            <person name="Waite C.N."/>
            <person name="Davies K.M."/>
            <person name="Grierson E.P."/>
            <person name="Laing W.A."/>
            <person name="Kirk R."/>
            <person name="Chen X."/>
            <person name="Wood M."/>
            <person name="Montefiori M."/>
            <person name="Brummell D.A."/>
            <person name="Schwinn K.E."/>
            <person name="Catanach A."/>
            <person name="Fullerton C."/>
            <person name="Li D."/>
            <person name="Meiyalaghan S."/>
            <person name="Nieuwenhuizen N."/>
            <person name="Read N."/>
            <person name="Prakash R."/>
            <person name="Hunter D."/>
            <person name="Zhang H."/>
            <person name="McKenzie M."/>
            <person name="Knabel M."/>
            <person name="Harris A."/>
            <person name="Allan A.C."/>
            <person name="Gleave A."/>
            <person name="Chen A."/>
            <person name="Janssen B.J."/>
            <person name="Plunkett B."/>
            <person name="Ampomah-Dwamena C."/>
            <person name="Voogd C."/>
            <person name="Leif D."/>
            <person name="Lafferty D."/>
            <person name="Souleyre E.J.F."/>
            <person name="Varkonyi-Gasic E."/>
            <person name="Gambi F."/>
            <person name="Hanley J."/>
            <person name="Yao J.L."/>
            <person name="Cheung J."/>
            <person name="David K.M."/>
            <person name="Warren B."/>
            <person name="Marsh K."/>
            <person name="Snowden K.C."/>
            <person name="Lin-Wang K."/>
            <person name="Brian L."/>
            <person name="Martinez-Sanchez M."/>
            <person name="Wang M."/>
            <person name="Ileperuma N."/>
            <person name="Macnee N."/>
            <person name="Campin R."/>
            <person name="McAtee P."/>
            <person name="Drummond R.S.M."/>
            <person name="Espley R.V."/>
            <person name="Ireland H.S."/>
            <person name="Wu R."/>
            <person name="Atkinson R.G."/>
            <person name="Karunairetnam S."/>
            <person name="Bulley S."/>
            <person name="Chunkath S."/>
            <person name="Hanley Z."/>
            <person name="Storey R."/>
            <person name="Thrimawithana A.H."/>
            <person name="Thomson S."/>
            <person name="David C."/>
            <person name="Testolin R."/>
            <person name="Huang H."/>
            <person name="Hellens R.P."/>
            <person name="Schaffer R.J."/>
        </authorList>
    </citation>
    <scope>NUCLEOTIDE SEQUENCE [LARGE SCALE GENOMIC DNA]</scope>
    <source>
        <strain>cv. Red5</strain>
    </source>
</reference>
<reference key="3">
    <citation type="journal article" date="2002" name="Phytochemistry">
        <title>Isolation of an antifungal thaumatin-like protein from kiwi fruits.</title>
        <authorList>
            <person name="Wang H."/>
            <person name="Ng T.B."/>
        </authorList>
    </citation>
    <scope>PROTEIN SEQUENCE OF 25-44</scope>
    <scope>FUNCTION</scope>
</reference>
<reference key="4">
    <citation type="journal article" date="2002" name="J. Allergy Clin. Immunol.">
        <title>Isolation and biochemical characterization of a thaumatin-like kiwi allergen.</title>
        <authorList>
            <person name="Gavrovic-Jankulovic M."/>
            <person name="Cirkovic T."/>
            <person name="Vuckovic O."/>
            <person name="Atanaskovic-Markovic M."/>
            <person name="Petersen A."/>
            <person name="Gojgic G."/>
            <person name="Burazer L."/>
            <person name="Jankov R.M."/>
        </authorList>
    </citation>
    <scope>PROTEIN SEQUENCE OF 25-37</scope>
    <scope>FUNCTION</scope>
    <scope>ALLERGEN</scope>
</reference>
<reference key="5">
    <citation type="journal article" date="2004" name="J. Allergy Clin. Immunol.">
        <title>IgE sensitization profiles toward green and gold kiwifruits differ among patients allergic to kiwifruit from 3 European countries.</title>
        <authorList>
            <person name="Bublin M."/>
            <person name="Mari A."/>
            <person name="Ebner C."/>
            <person name="Knulst A."/>
            <person name="Scheiner O."/>
            <person name="Hoffmann-Sommergruber K."/>
            <person name="Breiteneder H."/>
            <person name="Radauer C."/>
        </authorList>
    </citation>
    <scope>PROTEIN SEQUENCE OF 25-34</scope>
    <scope>ALLERGEN</scope>
    <source>
        <strain>cv. Hort 16A</strain>
        <tissue>Fruit</tissue>
    </source>
</reference>
<feature type="signal peptide" evidence="3 4 5">
    <location>
        <begin position="1"/>
        <end position="24"/>
    </location>
</feature>
<feature type="chain" id="PRO_0000096222" description="Thaumatin-like protein">
    <location>
        <begin position="25"/>
        <end position="225"/>
    </location>
</feature>
<feature type="disulfide bond" evidence="2">
    <location>
        <begin position="33"/>
        <end position="224"/>
    </location>
</feature>
<feature type="disulfide bond" evidence="2">
    <location>
        <begin position="74"/>
        <end position="84"/>
    </location>
</feature>
<feature type="disulfide bond" evidence="2">
    <location>
        <begin position="89"/>
        <end position="95"/>
    </location>
</feature>
<feature type="disulfide bond" evidence="2">
    <location>
        <begin position="140"/>
        <end position="213"/>
    </location>
</feature>
<feature type="disulfide bond" evidence="2">
    <location>
        <begin position="146"/>
        <end position="196"/>
    </location>
</feature>
<feature type="disulfide bond" evidence="2">
    <location>
        <begin position="154"/>
        <end position="164"/>
    </location>
</feature>
<feature type="disulfide bond" evidence="2">
    <location>
        <begin position="168"/>
        <end position="177"/>
    </location>
</feature>
<feature type="disulfide bond" evidence="2">
    <location>
        <begin position="178"/>
        <end position="183"/>
    </location>
</feature>
<feature type="sequence conflict" description="In Ref. 3; AA sequence." ref="3">
    <original>I</original>
    <variation>F</variation>
    <location>
        <position position="29"/>
    </location>
</feature>
<evidence type="ECO:0000250" key="1"/>
<evidence type="ECO:0000255" key="2">
    <source>
        <dbReference type="PROSITE-ProRule" id="PRU00699"/>
    </source>
</evidence>
<evidence type="ECO:0000269" key="3">
    <source>
    </source>
</evidence>
<evidence type="ECO:0000269" key="4">
    <source>
    </source>
</evidence>
<evidence type="ECO:0000269" key="5">
    <source>
    </source>
</evidence>
<evidence type="ECO:0000305" key="6"/>
<evidence type="ECO:0000312" key="7">
    <source>
        <dbReference type="EMBL" id="PSR91510.1"/>
    </source>
</evidence>
<gene>
    <name evidence="6" type="primary">TLP</name>
    <name evidence="7" type="ORF">CEY00_Acc28854</name>
</gene>
<proteinExistence type="evidence at protein level"/>
<protein>
    <recommendedName>
        <fullName>Thaumatin-like protein</fullName>
    </recommendedName>
    <allergenName>Act c 2</allergenName>
</protein>
<dbReference type="EMBL" id="JX905283">
    <property type="protein sequence ID" value="AGC39176.1"/>
    <property type="molecule type" value="mRNA"/>
</dbReference>
<dbReference type="EMBL" id="NKQK01000025">
    <property type="protein sequence ID" value="PSR91510.1"/>
    <property type="molecule type" value="Genomic_DNA"/>
</dbReference>
<dbReference type="SMR" id="P83958"/>
<dbReference type="STRING" id="1590841.P83958"/>
<dbReference type="Allergome" id="2407">
    <property type="allergen name" value="Act c 2"/>
</dbReference>
<dbReference type="Allergome" id="747">
    <property type="allergen name" value="Act d 2"/>
</dbReference>
<dbReference type="EnsemblPlants" id="PSR91510">
    <property type="protein sequence ID" value="PSR91510"/>
    <property type="gene ID" value="CEY00_Acc28854"/>
</dbReference>
<dbReference type="Gramene" id="PSR91510">
    <property type="protein sequence ID" value="PSR91510"/>
    <property type="gene ID" value="CEY00_Acc28854"/>
</dbReference>
<dbReference type="InParanoid" id="P83958"/>
<dbReference type="OMA" id="CKGGTNY"/>
<dbReference type="OrthoDB" id="430315at2759"/>
<dbReference type="Proteomes" id="UP000241394">
    <property type="component" value="Chromosome LG25"/>
</dbReference>
<dbReference type="GO" id="GO:0005576">
    <property type="term" value="C:extracellular region"/>
    <property type="evidence" value="ECO:0007669"/>
    <property type="project" value="UniProtKB-SubCell"/>
</dbReference>
<dbReference type="GO" id="GO:0050832">
    <property type="term" value="P:defense response to fungus"/>
    <property type="evidence" value="ECO:0007669"/>
    <property type="project" value="UniProtKB-KW"/>
</dbReference>
<dbReference type="GO" id="GO:0031640">
    <property type="term" value="P:killing of cells of another organism"/>
    <property type="evidence" value="ECO:0007669"/>
    <property type="project" value="UniProtKB-KW"/>
</dbReference>
<dbReference type="FunFam" id="2.60.110.10:FF:000003">
    <property type="entry name" value="Thaumatin I"/>
    <property type="match status" value="1"/>
</dbReference>
<dbReference type="Gene3D" id="2.60.110.10">
    <property type="entry name" value="Thaumatin"/>
    <property type="match status" value="1"/>
</dbReference>
<dbReference type="InterPro" id="IPR037176">
    <property type="entry name" value="Osmotin/thaumatin-like_sf"/>
</dbReference>
<dbReference type="InterPro" id="IPR001938">
    <property type="entry name" value="Thaumatin"/>
</dbReference>
<dbReference type="InterPro" id="IPR017949">
    <property type="entry name" value="Thaumatin_CS"/>
</dbReference>
<dbReference type="PANTHER" id="PTHR31048">
    <property type="entry name" value="OS03G0233200 PROTEIN"/>
    <property type="match status" value="1"/>
</dbReference>
<dbReference type="Pfam" id="PF00314">
    <property type="entry name" value="Thaumatin"/>
    <property type="match status" value="1"/>
</dbReference>
<dbReference type="PIRSF" id="PIRSF002703">
    <property type="entry name" value="Thaumatin"/>
    <property type="match status" value="1"/>
</dbReference>
<dbReference type="PRINTS" id="PR00347">
    <property type="entry name" value="THAUMATIN"/>
</dbReference>
<dbReference type="SMART" id="SM00205">
    <property type="entry name" value="THN"/>
    <property type="match status" value="1"/>
</dbReference>
<dbReference type="SUPFAM" id="SSF49870">
    <property type="entry name" value="Osmotin, thaumatin-like protein"/>
    <property type="match status" value="1"/>
</dbReference>
<dbReference type="PROSITE" id="PS00316">
    <property type="entry name" value="THAUMATIN_1"/>
    <property type="match status" value="1"/>
</dbReference>
<dbReference type="PROSITE" id="PS51367">
    <property type="entry name" value="THAUMATIN_2"/>
    <property type="match status" value="1"/>
</dbReference>
<organism>
    <name type="scientific">Actinidia chinensis var. chinensis</name>
    <name type="common">Chinese soft-hair kiwi</name>
    <dbReference type="NCBI Taxonomy" id="1590841"/>
    <lineage>
        <taxon>Eukaryota</taxon>
        <taxon>Viridiplantae</taxon>
        <taxon>Streptophyta</taxon>
        <taxon>Embryophyta</taxon>
        <taxon>Tracheophyta</taxon>
        <taxon>Spermatophyta</taxon>
        <taxon>Magnoliopsida</taxon>
        <taxon>eudicotyledons</taxon>
        <taxon>Gunneridae</taxon>
        <taxon>Pentapetalae</taxon>
        <taxon>asterids</taxon>
        <taxon>Ericales</taxon>
        <taxon>Actinidiaceae</taxon>
        <taxon>Actinidia</taxon>
    </lineage>
</organism>
<sequence>MSTFKSLSLSALLFIAFLFTCARGATFNIINNCPFTVWAAAVPGGGKRLDRGQNWIINPGAGTKGARVWARTGCNFDGAGRGKCQTGDCNGLLQCQAFGQPPNTLAEYALNQFNNLDFFDISLVDGFNVAMEFSPTSGGCTRGIKCTANINEQCPNELRAPGGCNNPCTVFKTDQYCCNSGNCGPTDYSRFFKTRCPDAYSYPKDDQTSTFTCPGGTNYKVVFCP</sequence>
<keyword id="KW-0020">Allergen</keyword>
<keyword id="KW-0929">Antimicrobial</keyword>
<keyword id="KW-0903">Direct protein sequencing</keyword>
<keyword id="KW-1015">Disulfide bond</keyword>
<keyword id="KW-0295">Fungicide</keyword>
<keyword id="KW-0325">Glycoprotein</keyword>
<keyword id="KW-0568">Pathogenesis-related protein</keyword>
<keyword id="KW-0611">Plant defense</keyword>
<keyword id="KW-1185">Reference proteome</keyword>
<keyword id="KW-0964">Secreted</keyword>
<keyword id="KW-0732">Signal</keyword>
<accession>P83958</accession>
<accession>A0A2R6PIP5</accession>
<accession>L7TRX2</accession>
<name>TLP_ACTCC</name>
<comment type="function">
    <text evidence="3 4">Has antifungal activity against B.cinerea, C.comatus, M.arachidicola, P.piricola, C.albicans and S.carlsbergensis. Inhibits HIV-1 reverse transcriptase.</text>
</comment>
<comment type="subcellular location">
    <subcellularLocation>
        <location>Secreted</location>
    </subcellularLocation>
</comment>
<comment type="PTM">
    <text evidence="1">N-glycosylated.</text>
</comment>
<comment type="allergen">
    <text evidence="4 5">Causes an allergic reaction in human. Binds to IgE from the serum of kiwi-allergic patients.</text>
</comment>
<comment type="similarity">
    <text evidence="6">Belongs to the thaumatin family.</text>
</comment>